<protein>
    <recommendedName>
        <fullName evidence="1">Probable glycine cleavage system H protein</fullName>
    </recommendedName>
</protein>
<gene>
    <name evidence="1" type="primary">gcvH</name>
    <name type="ordered locus">APE_0951.1</name>
</gene>
<evidence type="ECO:0000255" key="1">
    <source>
        <dbReference type="HAMAP-Rule" id="MF_00272"/>
    </source>
</evidence>
<evidence type="ECO:0000255" key="2">
    <source>
        <dbReference type="PROSITE-ProRule" id="PRU01066"/>
    </source>
</evidence>
<feature type="chain" id="PRO_0000166272" description="Probable glycine cleavage system H protein">
    <location>
        <begin position="1"/>
        <end position="143"/>
    </location>
</feature>
<feature type="domain" description="Lipoyl-binding" evidence="2">
    <location>
        <begin position="36"/>
        <end position="118"/>
    </location>
</feature>
<feature type="modified residue" description="N6-lipoyllysine" evidence="1">
    <location>
        <position position="77"/>
    </location>
</feature>
<comment type="function">
    <text evidence="1">The glycine cleavage system catalyzes the degradation of glycine. The H protein shuttles the methylamine group of glycine from the P protein to the T protein.</text>
</comment>
<comment type="cofactor">
    <cofactor evidence="1">
        <name>(R)-lipoate</name>
        <dbReference type="ChEBI" id="CHEBI:83088"/>
    </cofactor>
    <text evidence="1">Binds 1 lipoyl cofactor covalently.</text>
</comment>
<comment type="subunit">
    <text evidence="1">The glycine cleavage system is composed of four proteins: P, T, L and H.</text>
</comment>
<comment type="similarity">
    <text evidence="1">Belongs to the GcvH family.</text>
</comment>
<reference key="1">
    <citation type="journal article" date="1999" name="DNA Res.">
        <title>Complete genome sequence of an aerobic hyper-thermophilic crenarchaeon, Aeropyrum pernix K1.</title>
        <authorList>
            <person name="Kawarabayasi Y."/>
            <person name="Hino Y."/>
            <person name="Horikawa H."/>
            <person name="Yamazaki S."/>
            <person name="Haikawa Y."/>
            <person name="Jin-no K."/>
            <person name="Takahashi M."/>
            <person name="Sekine M."/>
            <person name="Baba S."/>
            <person name="Ankai A."/>
            <person name="Kosugi H."/>
            <person name="Hosoyama A."/>
            <person name="Fukui S."/>
            <person name="Nagai Y."/>
            <person name="Nishijima K."/>
            <person name="Nakazawa H."/>
            <person name="Takamiya M."/>
            <person name="Masuda S."/>
            <person name="Funahashi T."/>
            <person name="Tanaka T."/>
            <person name="Kudoh Y."/>
            <person name="Yamazaki J."/>
            <person name="Kushida N."/>
            <person name="Oguchi A."/>
            <person name="Aoki K."/>
            <person name="Kubota K."/>
            <person name="Nakamura Y."/>
            <person name="Nomura N."/>
            <person name="Sako Y."/>
            <person name="Kikuchi H."/>
        </authorList>
    </citation>
    <scope>NUCLEOTIDE SEQUENCE [LARGE SCALE GENOMIC DNA]</scope>
    <source>
        <strain>ATCC 700893 / DSM 11879 / JCM 9820 / NBRC 100138 / K1</strain>
    </source>
</reference>
<proteinExistence type="inferred from homology"/>
<organism>
    <name type="scientific">Aeropyrum pernix (strain ATCC 700893 / DSM 11879 / JCM 9820 / NBRC 100138 / K1)</name>
    <dbReference type="NCBI Taxonomy" id="272557"/>
    <lineage>
        <taxon>Archaea</taxon>
        <taxon>Thermoproteota</taxon>
        <taxon>Thermoprotei</taxon>
        <taxon>Desulfurococcales</taxon>
        <taxon>Desulfurococcaceae</taxon>
        <taxon>Aeropyrum</taxon>
    </lineage>
</organism>
<sequence>MGGQVIEVEVAGVRFLLRKDLRYTESDEWARLEDGVATVGITDFAQKELKDIVGVELPEKGRKVKKGEAVATVESIKATADIYAPLSGEIVDVNEKLLDQPELINDDPYGEGWIFKIKVEDPGEFESLLTPEQYVESVRKRKE</sequence>
<dbReference type="EMBL" id="BA000002">
    <property type="protein sequence ID" value="BAA79935.2"/>
    <property type="molecule type" value="Genomic_DNA"/>
</dbReference>
<dbReference type="PIR" id="G72691">
    <property type="entry name" value="G72691"/>
</dbReference>
<dbReference type="RefSeq" id="WP_010866089.1">
    <property type="nucleotide sequence ID" value="NC_000854.2"/>
</dbReference>
<dbReference type="SMR" id="Q9YDG2"/>
<dbReference type="STRING" id="272557.APE_0951.1"/>
<dbReference type="EnsemblBacteria" id="BAA79935">
    <property type="protein sequence ID" value="BAA79935"/>
    <property type="gene ID" value="APE_0951.1"/>
</dbReference>
<dbReference type="GeneID" id="1445028"/>
<dbReference type="KEGG" id="ape:APE_0951.1"/>
<dbReference type="PATRIC" id="fig|272557.25.peg.684"/>
<dbReference type="eggNOG" id="arCOG01303">
    <property type="taxonomic scope" value="Archaea"/>
</dbReference>
<dbReference type="Proteomes" id="UP000002518">
    <property type="component" value="Chromosome"/>
</dbReference>
<dbReference type="GO" id="GO:0005737">
    <property type="term" value="C:cytoplasm"/>
    <property type="evidence" value="ECO:0007669"/>
    <property type="project" value="TreeGrafter"/>
</dbReference>
<dbReference type="GO" id="GO:0005960">
    <property type="term" value="C:glycine cleavage complex"/>
    <property type="evidence" value="ECO:0007669"/>
    <property type="project" value="InterPro"/>
</dbReference>
<dbReference type="GO" id="GO:0019464">
    <property type="term" value="P:glycine decarboxylation via glycine cleavage system"/>
    <property type="evidence" value="ECO:0007669"/>
    <property type="project" value="UniProtKB-UniRule"/>
</dbReference>
<dbReference type="CDD" id="cd06848">
    <property type="entry name" value="GCS_H"/>
    <property type="match status" value="1"/>
</dbReference>
<dbReference type="Gene3D" id="2.40.50.100">
    <property type="match status" value="1"/>
</dbReference>
<dbReference type="HAMAP" id="MF_00272">
    <property type="entry name" value="GcvH"/>
    <property type="match status" value="1"/>
</dbReference>
<dbReference type="InterPro" id="IPR003016">
    <property type="entry name" value="2-oxoA_DH_lipoyl-BS"/>
</dbReference>
<dbReference type="InterPro" id="IPR000089">
    <property type="entry name" value="Biotin_lipoyl"/>
</dbReference>
<dbReference type="InterPro" id="IPR002930">
    <property type="entry name" value="GCV_H"/>
</dbReference>
<dbReference type="InterPro" id="IPR033753">
    <property type="entry name" value="GCV_H/Fam206"/>
</dbReference>
<dbReference type="InterPro" id="IPR017453">
    <property type="entry name" value="GCV_H_sub"/>
</dbReference>
<dbReference type="InterPro" id="IPR011053">
    <property type="entry name" value="Single_hybrid_motif"/>
</dbReference>
<dbReference type="NCBIfam" id="TIGR00527">
    <property type="entry name" value="gcvH"/>
    <property type="match status" value="1"/>
</dbReference>
<dbReference type="NCBIfam" id="NF002270">
    <property type="entry name" value="PRK01202.1"/>
    <property type="match status" value="1"/>
</dbReference>
<dbReference type="PANTHER" id="PTHR11715">
    <property type="entry name" value="GLYCINE CLEAVAGE SYSTEM H PROTEIN"/>
    <property type="match status" value="1"/>
</dbReference>
<dbReference type="PANTHER" id="PTHR11715:SF3">
    <property type="entry name" value="GLYCINE CLEAVAGE SYSTEM H PROTEIN-RELATED"/>
    <property type="match status" value="1"/>
</dbReference>
<dbReference type="Pfam" id="PF01597">
    <property type="entry name" value="GCV_H"/>
    <property type="match status" value="1"/>
</dbReference>
<dbReference type="SUPFAM" id="SSF51230">
    <property type="entry name" value="Single hybrid motif"/>
    <property type="match status" value="1"/>
</dbReference>
<dbReference type="PROSITE" id="PS50968">
    <property type="entry name" value="BIOTINYL_LIPOYL"/>
    <property type="match status" value="1"/>
</dbReference>
<dbReference type="PROSITE" id="PS00189">
    <property type="entry name" value="LIPOYL"/>
    <property type="match status" value="1"/>
</dbReference>
<accession>Q9YDG2</accession>
<name>GCSH_AERPE</name>
<keyword id="KW-0450">Lipoyl</keyword>
<keyword id="KW-1185">Reference proteome</keyword>